<accession>B0RXV1</accession>
<organism>
    <name type="scientific">Xanthomonas campestris pv. campestris (strain B100)</name>
    <dbReference type="NCBI Taxonomy" id="509169"/>
    <lineage>
        <taxon>Bacteria</taxon>
        <taxon>Pseudomonadati</taxon>
        <taxon>Pseudomonadota</taxon>
        <taxon>Gammaproteobacteria</taxon>
        <taxon>Lysobacterales</taxon>
        <taxon>Lysobacteraceae</taxon>
        <taxon>Xanthomonas</taxon>
    </lineage>
</organism>
<name>KTHY_XANCB</name>
<feature type="chain" id="PRO_1000097445" description="Thymidylate kinase">
    <location>
        <begin position="1"/>
        <end position="227"/>
    </location>
</feature>
<feature type="binding site" evidence="1">
    <location>
        <begin position="16"/>
        <end position="23"/>
    </location>
    <ligand>
        <name>ATP</name>
        <dbReference type="ChEBI" id="CHEBI:30616"/>
    </ligand>
</feature>
<comment type="function">
    <text evidence="1">Phosphorylation of dTMP to form dTDP in both de novo and salvage pathways of dTTP synthesis.</text>
</comment>
<comment type="catalytic activity">
    <reaction evidence="1">
        <text>dTMP + ATP = dTDP + ADP</text>
        <dbReference type="Rhea" id="RHEA:13517"/>
        <dbReference type="ChEBI" id="CHEBI:30616"/>
        <dbReference type="ChEBI" id="CHEBI:58369"/>
        <dbReference type="ChEBI" id="CHEBI:63528"/>
        <dbReference type="ChEBI" id="CHEBI:456216"/>
        <dbReference type="EC" id="2.7.4.9"/>
    </reaction>
</comment>
<comment type="similarity">
    <text evidence="1">Belongs to the thymidylate kinase family.</text>
</comment>
<gene>
    <name evidence="1" type="primary">tmk</name>
    <name type="ordered locus">xcc-b100_4118</name>
</gene>
<sequence length="227" mass="24001">MTIELTPGGLLIAIEGIDGAGKTTLARSLATLLEQAGARVVLSKEPTNGPWGTQLRQSAATGRLSAQDEVDLLLRDRREHVEALIAPALARGEIVILDRYFPSMVAYQGAAGLPLDALLAANDFAPRPDLLLLLDLPPPTGLARIRARGDAPNHFETQDNLERCRAIFAALQLPGKHVIDASADADSVLRQAHAVVVAALADRLRVGATHTDAEKAALELLSAGRPA</sequence>
<protein>
    <recommendedName>
        <fullName evidence="1">Thymidylate kinase</fullName>
        <ecNumber evidence="1">2.7.4.9</ecNumber>
    </recommendedName>
    <alternativeName>
        <fullName evidence="1">dTMP kinase</fullName>
    </alternativeName>
</protein>
<evidence type="ECO:0000255" key="1">
    <source>
        <dbReference type="HAMAP-Rule" id="MF_00165"/>
    </source>
</evidence>
<proteinExistence type="inferred from homology"/>
<reference key="1">
    <citation type="journal article" date="2008" name="J. Biotechnol.">
        <title>The genome of Xanthomonas campestris pv. campestris B100 and its use for the reconstruction of metabolic pathways involved in xanthan biosynthesis.</title>
        <authorList>
            <person name="Vorhoelter F.-J."/>
            <person name="Schneiker S."/>
            <person name="Goesmann A."/>
            <person name="Krause L."/>
            <person name="Bekel T."/>
            <person name="Kaiser O."/>
            <person name="Linke B."/>
            <person name="Patschkowski T."/>
            <person name="Rueckert C."/>
            <person name="Schmid J."/>
            <person name="Sidhu V.K."/>
            <person name="Sieber V."/>
            <person name="Tauch A."/>
            <person name="Watt S.A."/>
            <person name="Weisshaar B."/>
            <person name="Becker A."/>
            <person name="Niehaus K."/>
            <person name="Puehler A."/>
        </authorList>
    </citation>
    <scope>NUCLEOTIDE SEQUENCE [LARGE SCALE GENOMIC DNA]</scope>
    <source>
        <strain>B100</strain>
    </source>
</reference>
<dbReference type="EC" id="2.7.4.9" evidence="1"/>
<dbReference type="EMBL" id="AM920689">
    <property type="protein sequence ID" value="CAP53487.1"/>
    <property type="molecule type" value="Genomic_DNA"/>
</dbReference>
<dbReference type="SMR" id="B0RXV1"/>
<dbReference type="KEGG" id="xca:xcc-b100_4118"/>
<dbReference type="HOGENOM" id="CLU_049131_0_2_6"/>
<dbReference type="Proteomes" id="UP000001188">
    <property type="component" value="Chromosome"/>
</dbReference>
<dbReference type="GO" id="GO:0005829">
    <property type="term" value="C:cytosol"/>
    <property type="evidence" value="ECO:0007669"/>
    <property type="project" value="TreeGrafter"/>
</dbReference>
<dbReference type="GO" id="GO:0005524">
    <property type="term" value="F:ATP binding"/>
    <property type="evidence" value="ECO:0007669"/>
    <property type="project" value="UniProtKB-UniRule"/>
</dbReference>
<dbReference type="GO" id="GO:0004798">
    <property type="term" value="F:dTMP kinase activity"/>
    <property type="evidence" value="ECO:0007669"/>
    <property type="project" value="UniProtKB-UniRule"/>
</dbReference>
<dbReference type="GO" id="GO:0006233">
    <property type="term" value="P:dTDP biosynthetic process"/>
    <property type="evidence" value="ECO:0007669"/>
    <property type="project" value="InterPro"/>
</dbReference>
<dbReference type="GO" id="GO:0006235">
    <property type="term" value="P:dTTP biosynthetic process"/>
    <property type="evidence" value="ECO:0007669"/>
    <property type="project" value="UniProtKB-UniRule"/>
</dbReference>
<dbReference type="GO" id="GO:0006227">
    <property type="term" value="P:dUDP biosynthetic process"/>
    <property type="evidence" value="ECO:0007669"/>
    <property type="project" value="TreeGrafter"/>
</dbReference>
<dbReference type="CDD" id="cd01672">
    <property type="entry name" value="TMPK"/>
    <property type="match status" value="1"/>
</dbReference>
<dbReference type="Gene3D" id="3.40.50.300">
    <property type="entry name" value="P-loop containing nucleotide triphosphate hydrolases"/>
    <property type="match status" value="1"/>
</dbReference>
<dbReference type="HAMAP" id="MF_00165">
    <property type="entry name" value="Thymidylate_kinase"/>
    <property type="match status" value="1"/>
</dbReference>
<dbReference type="InterPro" id="IPR027417">
    <property type="entry name" value="P-loop_NTPase"/>
</dbReference>
<dbReference type="InterPro" id="IPR039430">
    <property type="entry name" value="Thymidylate_kin-like_dom"/>
</dbReference>
<dbReference type="InterPro" id="IPR018094">
    <property type="entry name" value="Thymidylate_kinase"/>
</dbReference>
<dbReference type="NCBIfam" id="TIGR00041">
    <property type="entry name" value="DTMP_kinase"/>
    <property type="match status" value="1"/>
</dbReference>
<dbReference type="PANTHER" id="PTHR10344">
    <property type="entry name" value="THYMIDYLATE KINASE"/>
    <property type="match status" value="1"/>
</dbReference>
<dbReference type="PANTHER" id="PTHR10344:SF4">
    <property type="entry name" value="UMP-CMP KINASE 2, MITOCHONDRIAL"/>
    <property type="match status" value="1"/>
</dbReference>
<dbReference type="Pfam" id="PF02223">
    <property type="entry name" value="Thymidylate_kin"/>
    <property type="match status" value="1"/>
</dbReference>
<dbReference type="SUPFAM" id="SSF52540">
    <property type="entry name" value="P-loop containing nucleoside triphosphate hydrolases"/>
    <property type="match status" value="1"/>
</dbReference>
<keyword id="KW-0067">ATP-binding</keyword>
<keyword id="KW-0418">Kinase</keyword>
<keyword id="KW-0545">Nucleotide biosynthesis</keyword>
<keyword id="KW-0547">Nucleotide-binding</keyword>
<keyword id="KW-0808">Transferase</keyword>